<feature type="chain" id="PRO_0000056729" description="Rho GTPase-activating protein 35">
    <location>
        <begin position="1"/>
        <end position="1500"/>
    </location>
</feature>
<feature type="domain" description="FF 1" evidence="11">
    <location>
        <begin position="270"/>
        <end position="327"/>
    </location>
</feature>
<feature type="domain" description="FF 2">
    <location>
        <begin position="368"/>
        <end position="422"/>
    </location>
</feature>
<feature type="domain" description="FF 3" evidence="11">
    <location>
        <begin position="429"/>
        <end position="483"/>
    </location>
</feature>
<feature type="domain" description="FF 4">
    <location>
        <begin position="485"/>
        <end position="550"/>
    </location>
</feature>
<feature type="domain" description="pG1 pseudoGTPase" evidence="6">
    <location>
        <begin position="592"/>
        <end position="767"/>
    </location>
</feature>
<feature type="domain" description="pG2 pseudoGTPase" evidence="7">
    <location>
        <begin position="783"/>
        <end position="947"/>
    </location>
</feature>
<feature type="domain" description="Rho-GAP" evidence="5">
    <location>
        <begin position="1250"/>
        <end position="1437"/>
    </location>
</feature>
<feature type="region of interest" description="Has GTPase activity, required for proper localization" evidence="3">
    <location>
        <begin position="1"/>
        <end position="266"/>
    </location>
</feature>
<feature type="region of interest" description="Disordered" evidence="8">
    <location>
        <begin position="970"/>
        <end position="989"/>
    </location>
</feature>
<feature type="region of interest" description="Disordered" evidence="8">
    <location>
        <begin position="1058"/>
        <end position="1090"/>
    </location>
</feature>
<feature type="region of interest" description="Disordered" evidence="8">
    <location>
        <begin position="1125"/>
        <end position="1147"/>
    </location>
</feature>
<feature type="region of interest" description="Disordered" evidence="8">
    <location>
        <begin position="1178"/>
        <end position="1208"/>
    </location>
</feature>
<feature type="region of interest" description="Required for phospholipid binding and regulation of the substrate preference" evidence="4">
    <location>
        <begin position="1214"/>
        <end position="1237"/>
    </location>
</feature>
<feature type="region of interest" description="Disordered" evidence="8">
    <location>
        <begin position="1444"/>
        <end position="1500"/>
    </location>
</feature>
<feature type="compositionally biased region" description="Polar residues" evidence="8">
    <location>
        <begin position="1125"/>
        <end position="1142"/>
    </location>
</feature>
<feature type="compositionally biased region" description="Low complexity" evidence="8">
    <location>
        <begin position="1449"/>
        <end position="1471"/>
    </location>
</feature>
<feature type="compositionally biased region" description="Pro residues" evidence="8">
    <location>
        <begin position="1472"/>
        <end position="1483"/>
    </location>
</feature>
<feature type="compositionally biased region" description="Polar residues" evidence="8">
    <location>
        <begin position="1490"/>
        <end position="1500"/>
    </location>
</feature>
<feature type="binding site" evidence="4">
    <location>
        <position position="28"/>
    </location>
    <ligand>
        <name>GTP</name>
        <dbReference type="ChEBI" id="CHEBI:37565"/>
    </ligand>
</feature>
<feature type="binding site" evidence="4">
    <location>
        <begin position="33"/>
        <end position="37"/>
    </location>
    <ligand>
        <name>GTP</name>
        <dbReference type="ChEBI" id="CHEBI:37565"/>
    </ligand>
</feature>
<feature type="binding site" evidence="4">
    <location>
        <position position="52"/>
    </location>
    <ligand>
        <name>GTP</name>
        <dbReference type="ChEBI" id="CHEBI:37565"/>
    </ligand>
</feature>
<feature type="binding site" evidence="4">
    <location>
        <position position="56"/>
    </location>
    <ligand>
        <name>GTP</name>
        <dbReference type="ChEBI" id="CHEBI:37565"/>
    </ligand>
</feature>
<feature type="binding site" evidence="4">
    <location>
        <begin position="95"/>
        <end position="97"/>
    </location>
    <ligand>
        <name>GTP</name>
        <dbReference type="ChEBI" id="CHEBI:37565"/>
    </ligand>
</feature>
<feature type="binding site" evidence="4">
    <location>
        <begin position="201"/>
        <end position="203"/>
    </location>
    <ligand>
        <name>GTP</name>
        <dbReference type="ChEBI" id="CHEBI:37565"/>
    </ligand>
</feature>
<feature type="binding site" evidence="4">
    <location>
        <begin position="229"/>
        <end position="231"/>
    </location>
    <ligand>
        <name>GTP</name>
        <dbReference type="ChEBI" id="CHEBI:37565"/>
    </ligand>
</feature>
<feature type="site" description="Arginine finger; crucial for GTP hydrolysis by stabilizing the transition state" evidence="5">
    <location>
        <position position="1285"/>
    </location>
</feature>
<feature type="modified residue" description="Phosphotyrosine" evidence="4">
    <location>
        <position position="308"/>
    </location>
</feature>
<feature type="modified residue" description="Phosphoserine" evidence="4">
    <location>
        <position position="589"/>
    </location>
</feature>
<feature type="modified residue" description="Phosphoserine" evidence="4">
    <location>
        <position position="770"/>
    </location>
</feature>
<feature type="modified residue" description="Phosphoserine" evidence="4">
    <location>
        <position position="773"/>
    </location>
</feature>
<feature type="modified residue" description="Phosphoserine" evidence="4">
    <location>
        <position position="970"/>
    </location>
</feature>
<feature type="modified residue" description="Phosphoserine" evidence="4">
    <location>
        <position position="975"/>
    </location>
</feature>
<feature type="modified residue" description="Phosphoserine" evidence="3">
    <location>
        <position position="985"/>
    </location>
</feature>
<feature type="modified residue" description="Phosphoserine" evidence="4">
    <location>
        <position position="1002"/>
    </location>
</feature>
<feature type="modified residue" description="Phosphoserine" evidence="4">
    <location>
        <position position="1073"/>
    </location>
</feature>
<feature type="modified residue" description="Phosphotyrosine" evidence="4">
    <location>
        <position position="1088"/>
    </location>
</feature>
<feature type="modified residue" description="Phosphotyrosine; by ABL2 and PTK6" evidence="4">
    <location>
        <position position="1106"/>
    </location>
</feature>
<feature type="modified residue" description="Phosphoserine" evidence="4">
    <location>
        <position position="1135"/>
    </location>
</feature>
<feature type="modified residue" description="Phosphoserine" evidence="3">
    <location>
        <position position="1143"/>
    </location>
</feature>
<feature type="modified residue" description="Phosphoserine" evidence="4">
    <location>
        <position position="1151"/>
    </location>
</feature>
<feature type="modified residue" description="Phosphoserine" evidence="4">
    <location>
        <position position="1177"/>
    </location>
</feature>
<feature type="modified residue" description="Phosphoserine" evidence="4">
    <location>
        <position position="1180"/>
    </location>
</feature>
<feature type="modified residue" description="Phosphoserine" evidence="4">
    <location>
        <position position="1222"/>
    </location>
</feature>
<feature type="modified residue" description="Phosphothreonine" evidence="4">
    <location>
        <position position="1227"/>
    </location>
</feature>
<feature type="modified residue" description="Phosphoserine" evidence="4">
    <location>
        <position position="1237"/>
    </location>
</feature>
<feature type="modified residue" description="Phosphoserine" evidence="3">
    <location>
        <position position="1473"/>
    </location>
</feature>
<feature type="modified residue" description="Phosphoserine" evidence="3">
    <location>
        <position position="1477"/>
    </location>
</feature>
<feature type="modified residue" description="Phosphothreonine" evidence="3">
    <location>
        <position position="1481"/>
    </location>
</feature>
<feature type="modified residue" description="Phosphoserine" evidence="3">
    <location>
        <position position="1484"/>
    </location>
</feature>
<proteinExistence type="evidence at transcript level"/>
<organism evidence="12">
    <name type="scientific">Canis lupus familiaris</name>
    <name type="common">Dog</name>
    <name type="synonym">Canis familiaris</name>
    <dbReference type="NCBI Taxonomy" id="9615"/>
    <lineage>
        <taxon>Eukaryota</taxon>
        <taxon>Metazoa</taxon>
        <taxon>Chordata</taxon>
        <taxon>Craniata</taxon>
        <taxon>Vertebrata</taxon>
        <taxon>Euteleostomi</taxon>
        <taxon>Mammalia</taxon>
        <taxon>Eutheria</taxon>
        <taxon>Laurasiatheria</taxon>
        <taxon>Carnivora</taxon>
        <taxon>Caniformia</taxon>
        <taxon>Canidae</taxon>
        <taxon>Canis</taxon>
    </lineage>
</organism>
<keyword id="KW-1003">Cell membrane</keyword>
<keyword id="KW-0966">Cell projection</keyword>
<keyword id="KW-0963">Cytoplasm</keyword>
<keyword id="KW-0206">Cytoskeleton</keyword>
<keyword id="KW-0238">DNA-binding</keyword>
<keyword id="KW-0342">GTP-binding</keyword>
<keyword id="KW-0343">GTPase activation</keyword>
<keyword id="KW-0446">Lipid-binding</keyword>
<keyword id="KW-0472">Membrane</keyword>
<keyword id="KW-0547">Nucleotide-binding</keyword>
<keyword id="KW-0539">Nucleus</keyword>
<keyword id="KW-0597">Phosphoprotein</keyword>
<keyword id="KW-1185">Reference proteome</keyword>
<keyword id="KW-0677">Repeat</keyword>
<keyword id="KW-0678">Repressor</keyword>
<keyword id="KW-0804">Transcription</keyword>
<keyword id="KW-0805">Transcription regulation</keyword>
<sequence length="1500" mass="170428">MMMARKQDVRIPTYNISVVGLSGTEKEKGQCGIGKSCLCNRFVRPSADEFHLDHTSVLSTSDFGGRVVNNDHFLYWGEVSRSLEDCVECKMHIVEQTEFIDDQTFQPHRSTALQPYIKRAAATKLASAEKLMYFCTDQLGLEQDFEQKQMPDGKLLIDGFLLGIDVSRGMNRNFDDQLKFVSNLYNQLAKTKKPIVVVLTKCDEGVERYIRDAHTFALSKKNLQVVETSARSNVNVDLAFSTLVQLIDKSRGKTKIIPYFEALKQQSQQIATAKDKYEWLVSRIVKNHNENWLSVSRKMQASPEYQDYVYLEGTQKAKKLFLQHIHRLKHEHIERRRKLYLAALPLAFEALIPNLDEIDHLSCIKTKKLLETKPEFLKWFVVLEETPWDATSHIDNMENERIPFDLMDTVPAEQLYEAHLEKLRNERKRAEMRRAFKENLETSPFITPGKPWEEARSFIMNEDFYQWLEESVYMDIYGKHQKQIIDKAKEEFQELLLEYSELFYELELDAKPSKEKMGVIQDVLGEEQRFKALQKLQAERDALILKHIHFVYHPTKETCPSCPACVDAKIEHLISSRFIRPSDRNQKNSLSDPNIDRINLVILGKDGLARELANEIRALCTNDDKYVIDGKMYELSLRPIEGNVRLPVNSFQTPTFQPHGCLCLYNSKESLSYVVESIEKSRESTLGRRDNHLVHLPLTLILVNKRGDTSGETLHSLIQQGQQIASKLQCVFLDPASAGIGYGRNINEKQISQVLKGLLDSKRNLNLVSSTASIKDLADVDLRIVMCLMCGDPFSADDILFPVLQSQTCKSSHCGSNNSVLLELPIGLHKKRIELSILSYHSSFSIRKSRLVHGYIVFYSAKRKASLAMLRAFLCEVQDIIPIQLVALTDGAIDVLDNDLSREQLSEGEEIAQEIDGRFTSIPCSQPQHKLEIFHPFFKDVVDKKNIIEATHMYDNAAEACSTTEEVFNSPRAGSPLCNSNLQDSEEDIEPPSYSLFREDTSLPSLSKDHSKLSMELEGNDGLSFIMSNFESKLNNKVPPPVKPKPPVQFDITKGDLSYLDQGHRDGQRKSVSSSTWLPPDGFDPSDYAEPMDAVVKPRNEEENIYSVPHDSTQGKIITIRNINKAQSNGSGNGSDSEMDTSSLERGRKVSIVSKPVLYRTRCSRLGRFASYRTSFSVGSDDELGPIRKKEEDQASQGYKGDNAVIPYETDEDPRRRNILRSLRRNTKKPKPKPRPSITKATWESNYFGVPLTTVVTPEKPIPVFIERCIEYIEATGLSTEGIYRVSGNKSEMESLQRQFDQDHNLDLAEKDFTVNTVAGAMKSFFSELPDPLVPYNMQIDLVEAHKINDREQKLHALKEVLKKFPKENHEVFKYVISHLNKVSHNNKVNLMTSENLSICFWPTLMRPDFSTMDALTATRTYQTIIELFIQQCPFFFHNRPISEPPGATPSSPSAVASTVPFLTSTPVTSQPSPPQSPPPTPQSPMQALLPSQLQAEHTL</sequence>
<comment type="function">
    <text evidence="1 3 4">Rho GTPase-activating protein (GAP). Binds several acidic phospholipids which inhibits the Rho GAP activity to promote the Rac GAP activity. This binding is inhibited by phosphorylation by PRKCA (By similarity). Involved in cell differentiation as well as cell adhesion and migration, plays an important role in retinal tissue morphogenesis, neural tube fusion, midline fusion of the cerebral hemispheres and mammary gland branching morphogenesis (By similarity). Transduces signals from p21-ras to the nucleus, acting via the ras GTPase-activating protein (GAP) (By similarity). Transduces SRC-dependent signals from cell-surface adhesion molecules, such as laminin, to promote neurite outgrowth. Regulates axon outgrowth, guidance and fasciculation (By similarity). Modulates Rho GTPase-dependent F-actin polymerization, organization and assembly, is involved in polarized cell migration and in the positive regulation of ciliogenesis and cilia elongation (By similarity). During mammary gland development, is required in both the epithelial and stromal compartments for ductal outgrowth (By similarity). Represses transcription of the glucocorticoid receptor by binding to the cis-acting regulatory sequence 5'-GAGAAAAGAAACTGGAGAAACTC-3'; this function is however unclear and would need additional experimental evidences (By similarity).</text>
</comment>
<comment type="subunit">
    <text evidence="3 4">Interacts with RASA1 (By similarity). Interacts with the general transcription factor GTF2I, the interaction sequesters GTF2I in the cytoplasm (By similarity).</text>
</comment>
<comment type="subcellular location">
    <subcellularLocation>
        <location evidence="3">Cytoplasm</location>
        <location evidence="3">Cytoskeleton</location>
        <location evidence="3">Cilium basal body</location>
    </subcellularLocation>
    <subcellularLocation>
        <location evidence="3">Cytoplasm</location>
    </subcellularLocation>
    <subcellularLocation>
        <location evidence="3">Nucleus</location>
    </subcellularLocation>
    <subcellularLocation>
        <location evidence="3">Cell membrane</location>
    </subcellularLocation>
    <text evidence="3">In response to integrins and SDC4 and upon phosphorylation by PKC, relocalizes from the cytoplasm to regions of plasma membrane ruffling where it colocalizes with polymerized actin.</text>
</comment>
<comment type="tissue specificity">
    <text evidence="9">Strongly expressed in retina (photoreceptor layer) and brain. Expression is maximal in the occipital, frontal, temporal lobe and also the cerebellum. Medium expression in the medulla and also in kidney, lung, liver, heart and spleen.</text>
</comment>
<comment type="domain">
    <text evidence="3">N-terminal part (1-266) has GTPase activity. Required for proper cellular localization.</text>
</comment>
<comment type="domain">
    <text evidence="2">The pG1 pseudoGTPase domain does not bind GTP.</text>
</comment>
<comment type="PTM">
    <text evidence="1 3 4">Phosphorylation of Tyr-1106 by PTK6 promotes the association with RASA1, inactivating RHOA while activating RAS. Phosphorylation at Tyr-308 by PDGFRA inhibits binding to GTF2I (By similarity). Phosphorylated by PRKCA at Ser-1222 and Thr-1227, induces relocalization from the cytoplasm to regions of plasma membrane ruffling and prevents the binding and substrate specificity regulation by phospholipids. In brain, phosphorylated by FYN and SRC (By similarity). During focal adhesion formation, phosphorylated by MAPK1 and MAPK3 at the C-terminal region, probably at Ser-1452, Ser-1477, Thr-1481 and Ser-1484. Phosphorylation by MAPK1 and MAPK3 inhibits GAP function and localizes ARGHAP35 away from newly forming focal adhesions and stress fibers in cells spreading on fibronectin (By similarity). Phosphorylation at Ser-1477 and Thr-1481 by GSK3B requires priming by MAPK and inhibits RhoGAP activity and modulates polarized cell migration (By similarity).</text>
</comment>
<evidence type="ECO:0000250" key="1">
    <source>
        <dbReference type="UniProtKB" id="P81128"/>
    </source>
</evidence>
<evidence type="ECO:0000250" key="2">
    <source>
        <dbReference type="UniProtKB" id="Q6NU25"/>
    </source>
</evidence>
<evidence type="ECO:0000250" key="3">
    <source>
        <dbReference type="UniProtKB" id="Q91YM2"/>
    </source>
</evidence>
<evidence type="ECO:0000250" key="4">
    <source>
        <dbReference type="UniProtKB" id="Q9NRY4"/>
    </source>
</evidence>
<evidence type="ECO:0000255" key="5">
    <source>
        <dbReference type="PROSITE-ProRule" id="PRU00172"/>
    </source>
</evidence>
<evidence type="ECO:0000255" key="6">
    <source>
        <dbReference type="PROSITE-ProRule" id="PRU01199"/>
    </source>
</evidence>
<evidence type="ECO:0000255" key="7">
    <source>
        <dbReference type="PROSITE-ProRule" id="PRU01200"/>
    </source>
</evidence>
<evidence type="ECO:0000256" key="8">
    <source>
        <dbReference type="SAM" id="MobiDB-lite"/>
    </source>
</evidence>
<evidence type="ECO:0000269" key="9">
    <source>
    </source>
</evidence>
<evidence type="ECO:0000303" key="10">
    <source>
    </source>
</evidence>
<evidence type="ECO:0000305" key="11"/>
<evidence type="ECO:0000312" key="12">
    <source>
        <dbReference type="EMBL" id="AAN16354.1"/>
    </source>
</evidence>
<dbReference type="EMBL" id="AF483595">
    <property type="protein sequence ID" value="AAN16354.1"/>
    <property type="molecule type" value="mRNA"/>
</dbReference>
<dbReference type="EMBL" id="AY079157">
    <property type="protein sequence ID" value="AAL91068.1"/>
    <property type="molecule type" value="Genomic_DNA"/>
</dbReference>
<dbReference type="EMBL" id="AY079158">
    <property type="protein sequence ID" value="AAL91069.1"/>
    <property type="molecule type" value="Genomic_DNA"/>
</dbReference>
<dbReference type="RefSeq" id="NP_001003022.1">
    <property type="nucleotide sequence ID" value="NM_001003022.1"/>
</dbReference>
<dbReference type="BMRB" id="P83509"/>
<dbReference type="SMR" id="P83509"/>
<dbReference type="FunCoup" id="P83509">
    <property type="interactions" value="1574"/>
</dbReference>
<dbReference type="STRING" id="9615.ENSCAFP00000036971"/>
<dbReference type="PaxDb" id="9612-ENSCAFP00000036971"/>
<dbReference type="Ensembl" id="ENSCAFT00000006727.5">
    <property type="protein sequence ID" value="ENSCAFP00000006228.3"/>
    <property type="gene ID" value="ENSCAFG00000004190.6"/>
</dbReference>
<dbReference type="Ensembl" id="ENSCAFT00030013717.1">
    <property type="protein sequence ID" value="ENSCAFP00030011972.1"/>
    <property type="gene ID" value="ENSCAFG00030007402.1"/>
</dbReference>
<dbReference type="Ensembl" id="ENSCAFT00040004921.1">
    <property type="protein sequence ID" value="ENSCAFP00040004225.1"/>
    <property type="gene ID" value="ENSCAFG00040002575.1"/>
</dbReference>
<dbReference type="Ensembl" id="ENSCAFT00845005450.1">
    <property type="protein sequence ID" value="ENSCAFP00845004333.1"/>
    <property type="gene ID" value="ENSCAFG00845003086.1"/>
</dbReference>
<dbReference type="GeneID" id="403543"/>
<dbReference type="KEGG" id="cfa:403543"/>
<dbReference type="CTD" id="2909"/>
<dbReference type="VEuPathDB" id="HostDB:ENSCAFG00845003086"/>
<dbReference type="VGNC" id="VGNC:38060">
    <property type="gene designation" value="ARHGAP35"/>
</dbReference>
<dbReference type="eggNOG" id="KOG4271">
    <property type="taxonomic scope" value="Eukaryota"/>
</dbReference>
<dbReference type="GeneTree" id="ENSGT01030000234635"/>
<dbReference type="HOGENOM" id="CLU_004268_0_0_1"/>
<dbReference type="InParanoid" id="P83509"/>
<dbReference type="OrthoDB" id="9994905at2759"/>
<dbReference type="Reactome" id="R-CFA-416550">
    <property type="pathway name" value="Sema4D mediated inhibition of cell attachment and migration"/>
</dbReference>
<dbReference type="Reactome" id="R-CFA-8849471">
    <property type="pathway name" value="PTK6 Regulates RHO GTPases, RAS GTPase and MAP kinases"/>
</dbReference>
<dbReference type="Reactome" id="R-CFA-8980692">
    <property type="pathway name" value="RHOA GTPase cycle"/>
</dbReference>
<dbReference type="Reactome" id="R-CFA-9013026">
    <property type="pathway name" value="RHOB GTPase cycle"/>
</dbReference>
<dbReference type="Reactome" id="R-CFA-9013106">
    <property type="pathway name" value="RHOC GTPase cycle"/>
</dbReference>
<dbReference type="Reactome" id="R-CFA-9013148">
    <property type="pathway name" value="CDC42 GTPase cycle"/>
</dbReference>
<dbReference type="Reactome" id="R-CFA-9013149">
    <property type="pathway name" value="RAC1 GTPase cycle"/>
</dbReference>
<dbReference type="Reactome" id="R-CFA-9013404">
    <property type="pathway name" value="RAC2 GTPase cycle"/>
</dbReference>
<dbReference type="Reactome" id="R-CFA-9013405">
    <property type="pathway name" value="RHOD GTPase cycle"/>
</dbReference>
<dbReference type="Reactome" id="R-CFA-9013406">
    <property type="pathway name" value="RHOQ GTPase cycle"/>
</dbReference>
<dbReference type="Reactome" id="R-CFA-9013408">
    <property type="pathway name" value="RHOG GTPase cycle"/>
</dbReference>
<dbReference type="Reactome" id="R-CFA-9013409">
    <property type="pathway name" value="RHOJ GTPase cycle"/>
</dbReference>
<dbReference type="Reactome" id="R-CFA-9013423">
    <property type="pathway name" value="RAC3 GTPase cycle"/>
</dbReference>
<dbReference type="Reactome" id="R-CFA-9696264">
    <property type="pathway name" value="RND3 GTPase cycle"/>
</dbReference>
<dbReference type="Reactome" id="R-CFA-9696270">
    <property type="pathway name" value="RND2 GTPase cycle"/>
</dbReference>
<dbReference type="Reactome" id="R-CFA-9696273">
    <property type="pathway name" value="RND1 GTPase cycle"/>
</dbReference>
<dbReference type="Proteomes" id="UP000002254">
    <property type="component" value="Chromosome 1"/>
</dbReference>
<dbReference type="Proteomes" id="UP000694429">
    <property type="component" value="Chromosome 1"/>
</dbReference>
<dbReference type="Proteomes" id="UP000694542">
    <property type="component" value="Chromosome 1"/>
</dbReference>
<dbReference type="Proteomes" id="UP000805418">
    <property type="component" value="Chromosome 1"/>
</dbReference>
<dbReference type="GO" id="GO:0015629">
    <property type="term" value="C:actin cytoskeleton"/>
    <property type="evidence" value="ECO:0007669"/>
    <property type="project" value="Ensembl"/>
</dbReference>
<dbReference type="GO" id="GO:0036064">
    <property type="term" value="C:ciliary basal body"/>
    <property type="evidence" value="ECO:0000250"/>
    <property type="project" value="UniProtKB"/>
</dbReference>
<dbReference type="GO" id="GO:0005829">
    <property type="term" value="C:cytosol"/>
    <property type="evidence" value="ECO:0000318"/>
    <property type="project" value="GO_Central"/>
</dbReference>
<dbReference type="GO" id="GO:0005634">
    <property type="term" value="C:nucleus"/>
    <property type="evidence" value="ECO:0007669"/>
    <property type="project" value="UniProtKB-SubCell"/>
</dbReference>
<dbReference type="GO" id="GO:0005886">
    <property type="term" value="C:plasma membrane"/>
    <property type="evidence" value="ECO:0007669"/>
    <property type="project" value="UniProtKB-SubCell"/>
</dbReference>
<dbReference type="GO" id="GO:0003677">
    <property type="term" value="F:DNA binding"/>
    <property type="evidence" value="ECO:0007669"/>
    <property type="project" value="UniProtKB-KW"/>
</dbReference>
<dbReference type="GO" id="GO:0005525">
    <property type="term" value="F:GTP binding"/>
    <property type="evidence" value="ECO:0007669"/>
    <property type="project" value="UniProtKB-KW"/>
</dbReference>
<dbReference type="GO" id="GO:0005096">
    <property type="term" value="F:GTPase activator activity"/>
    <property type="evidence" value="ECO:0000250"/>
    <property type="project" value="UniProtKB"/>
</dbReference>
<dbReference type="GO" id="GO:0003924">
    <property type="term" value="F:GTPase activity"/>
    <property type="evidence" value="ECO:0007669"/>
    <property type="project" value="InterPro"/>
</dbReference>
<dbReference type="GO" id="GO:0005543">
    <property type="term" value="F:phospholipid binding"/>
    <property type="evidence" value="ECO:0000250"/>
    <property type="project" value="UniProtKB"/>
</dbReference>
<dbReference type="GO" id="GO:0007411">
    <property type="term" value="P:axon guidance"/>
    <property type="evidence" value="ECO:0000250"/>
    <property type="project" value="UniProtKB"/>
</dbReference>
<dbReference type="GO" id="GO:0007413">
    <property type="term" value="P:axonal fasciculation"/>
    <property type="evidence" value="ECO:0000250"/>
    <property type="project" value="UniProtKB"/>
</dbReference>
<dbReference type="GO" id="GO:0043010">
    <property type="term" value="P:camera-type eye development"/>
    <property type="evidence" value="ECO:0007669"/>
    <property type="project" value="Ensembl"/>
</dbReference>
<dbReference type="GO" id="GO:0016477">
    <property type="term" value="P:cell migration"/>
    <property type="evidence" value="ECO:0000250"/>
    <property type="project" value="UniProtKB"/>
</dbReference>
<dbReference type="GO" id="GO:0021955">
    <property type="term" value="P:central nervous system neuron axonogenesis"/>
    <property type="evidence" value="ECO:0000250"/>
    <property type="project" value="UniProtKB"/>
</dbReference>
<dbReference type="GO" id="GO:0030950">
    <property type="term" value="P:establishment or maintenance of actin cytoskeleton polarity"/>
    <property type="evidence" value="ECO:0000250"/>
    <property type="project" value="UniProtKB"/>
</dbReference>
<dbReference type="GO" id="GO:0030900">
    <property type="term" value="P:forebrain development"/>
    <property type="evidence" value="ECO:0007669"/>
    <property type="project" value="Ensembl"/>
</dbReference>
<dbReference type="GO" id="GO:0030879">
    <property type="term" value="P:mammary gland development"/>
    <property type="evidence" value="ECO:0000250"/>
    <property type="project" value="UniProtKB"/>
</dbReference>
<dbReference type="GO" id="GO:0035024">
    <property type="term" value="P:negative regulation of Rho protein signal transduction"/>
    <property type="evidence" value="ECO:0007669"/>
    <property type="project" value="Ensembl"/>
</dbReference>
<dbReference type="GO" id="GO:0043116">
    <property type="term" value="P:negative regulation of vascular permeability"/>
    <property type="evidence" value="ECO:0007669"/>
    <property type="project" value="Ensembl"/>
</dbReference>
<dbReference type="GO" id="GO:0001843">
    <property type="term" value="P:neural tube closure"/>
    <property type="evidence" value="ECO:0007669"/>
    <property type="project" value="Ensembl"/>
</dbReference>
<dbReference type="GO" id="GO:0097485">
    <property type="term" value="P:neuron projection guidance"/>
    <property type="evidence" value="ECO:0000250"/>
    <property type="project" value="UniProtKB"/>
</dbReference>
<dbReference type="GO" id="GO:0045724">
    <property type="term" value="P:positive regulation of cilium assembly"/>
    <property type="evidence" value="ECO:0000250"/>
    <property type="project" value="UniProtKB"/>
</dbReference>
<dbReference type="GO" id="GO:0043547">
    <property type="term" value="P:positive regulation of GTPase activity"/>
    <property type="evidence" value="ECO:0000250"/>
    <property type="project" value="UniProtKB"/>
</dbReference>
<dbReference type="GO" id="GO:0010976">
    <property type="term" value="P:positive regulation of neuron projection development"/>
    <property type="evidence" value="ECO:0000250"/>
    <property type="project" value="UniProtKB"/>
</dbReference>
<dbReference type="GO" id="GO:0032956">
    <property type="term" value="P:regulation of actin cytoskeleton organization"/>
    <property type="evidence" value="ECO:0000250"/>
    <property type="project" value="UniProtKB"/>
</dbReference>
<dbReference type="GO" id="GO:0008064">
    <property type="term" value="P:regulation of actin polymerization or depolymerization"/>
    <property type="evidence" value="ECO:0000250"/>
    <property type="project" value="UniProtKB"/>
</dbReference>
<dbReference type="GO" id="GO:0050770">
    <property type="term" value="P:regulation of axonogenesis"/>
    <property type="evidence" value="ECO:0000250"/>
    <property type="project" value="UniProtKB"/>
</dbReference>
<dbReference type="GO" id="GO:0008360">
    <property type="term" value="P:regulation of cell shape"/>
    <property type="evidence" value="ECO:0007669"/>
    <property type="project" value="Ensembl"/>
</dbReference>
<dbReference type="GO" id="GO:0008361">
    <property type="term" value="P:regulation of cell size"/>
    <property type="evidence" value="ECO:0000318"/>
    <property type="project" value="GO_Central"/>
</dbReference>
<dbReference type="GO" id="GO:0042478">
    <property type="term" value="P:regulation of eye photoreceptor cell development"/>
    <property type="evidence" value="ECO:0000303"/>
    <property type="project" value="UniProtKB"/>
</dbReference>
<dbReference type="GO" id="GO:0007266">
    <property type="term" value="P:Rho protein signal transduction"/>
    <property type="evidence" value="ECO:0000318"/>
    <property type="project" value="GO_Central"/>
</dbReference>
<dbReference type="GO" id="GO:0044319">
    <property type="term" value="P:wound healing, spreading of cells"/>
    <property type="evidence" value="ECO:0000250"/>
    <property type="project" value="UniProtKB"/>
</dbReference>
<dbReference type="CDD" id="cd22221">
    <property type="entry name" value="pseudoGTPaseD_p190RhoGAP-A"/>
    <property type="match status" value="1"/>
</dbReference>
<dbReference type="CDD" id="cd04373">
    <property type="entry name" value="RhoGAP_p190"/>
    <property type="match status" value="1"/>
</dbReference>
<dbReference type="FunFam" id="1.10.10.440:FF:000007">
    <property type="entry name" value="Putative rho GTPase-activating protein 5"/>
    <property type="match status" value="1"/>
</dbReference>
<dbReference type="FunFam" id="1.10.10.440:FF:000017">
    <property type="entry name" value="Rho GTPase activating protein 35"/>
    <property type="match status" value="1"/>
</dbReference>
<dbReference type="FunFam" id="3.40.50.300:FF:000349">
    <property type="entry name" value="Rho GTPase-activating protein 5"/>
    <property type="match status" value="1"/>
</dbReference>
<dbReference type="FunFam" id="1.10.555.10:FF:000021">
    <property type="entry name" value="rho GTPase-activating protein 5"/>
    <property type="match status" value="1"/>
</dbReference>
<dbReference type="Gene3D" id="1.10.10.440">
    <property type="entry name" value="FF domain"/>
    <property type="match status" value="2"/>
</dbReference>
<dbReference type="Gene3D" id="3.40.50.300">
    <property type="entry name" value="P-loop containing nucleotide triphosphate hydrolases"/>
    <property type="match status" value="1"/>
</dbReference>
<dbReference type="Gene3D" id="1.10.555.10">
    <property type="entry name" value="Rho GTPase activation protein"/>
    <property type="match status" value="1"/>
</dbReference>
<dbReference type="InterPro" id="IPR002713">
    <property type="entry name" value="FF_domain"/>
</dbReference>
<dbReference type="InterPro" id="IPR036517">
    <property type="entry name" value="FF_domain_sf"/>
</dbReference>
<dbReference type="InterPro" id="IPR027417">
    <property type="entry name" value="P-loop_NTPase"/>
</dbReference>
<dbReference type="InterPro" id="IPR039007">
    <property type="entry name" value="pG1"/>
</dbReference>
<dbReference type="InterPro" id="IPR051978">
    <property type="entry name" value="Rho-GAP_domain"/>
</dbReference>
<dbReference type="InterPro" id="IPR008936">
    <property type="entry name" value="Rho_GTPase_activation_prot"/>
</dbReference>
<dbReference type="InterPro" id="IPR032835">
    <property type="entry name" value="RhoGAP-FF1"/>
</dbReference>
<dbReference type="InterPro" id="IPR000198">
    <property type="entry name" value="RhoGAP_dom"/>
</dbReference>
<dbReference type="InterPro" id="IPR045786">
    <property type="entry name" value="RhoGAP_pG1_pG2"/>
</dbReference>
<dbReference type="InterPro" id="IPR039006">
    <property type="entry name" value="RhoGAP_pG2"/>
</dbReference>
<dbReference type="InterPro" id="IPR001806">
    <property type="entry name" value="Small_GTPase"/>
</dbReference>
<dbReference type="PANTHER" id="PTHR46005">
    <property type="entry name" value="RHO GTPASE-ACTIVATING PROTEIN 190"/>
    <property type="match status" value="1"/>
</dbReference>
<dbReference type="PANTHER" id="PTHR46005:SF1">
    <property type="entry name" value="RHO GTPASE-ACTIVATING PROTEIN 35"/>
    <property type="match status" value="1"/>
</dbReference>
<dbReference type="Pfam" id="PF23083">
    <property type="entry name" value="FF_RHG35_4th"/>
    <property type="match status" value="1"/>
</dbReference>
<dbReference type="Pfam" id="PF00071">
    <property type="entry name" value="Ras"/>
    <property type="match status" value="1"/>
</dbReference>
<dbReference type="Pfam" id="PF00620">
    <property type="entry name" value="RhoGAP"/>
    <property type="match status" value="1"/>
</dbReference>
<dbReference type="Pfam" id="PF16512">
    <property type="entry name" value="RhoGAP-FF1"/>
    <property type="match status" value="1"/>
</dbReference>
<dbReference type="Pfam" id="PF19518">
    <property type="entry name" value="RhoGAP_pG1_pG2"/>
    <property type="match status" value="1"/>
</dbReference>
<dbReference type="SMART" id="SM00441">
    <property type="entry name" value="FF"/>
    <property type="match status" value="4"/>
</dbReference>
<dbReference type="SMART" id="SM00324">
    <property type="entry name" value="RhoGAP"/>
    <property type="match status" value="1"/>
</dbReference>
<dbReference type="SUPFAM" id="SSF81698">
    <property type="entry name" value="FF domain"/>
    <property type="match status" value="1"/>
</dbReference>
<dbReference type="SUPFAM" id="SSF48350">
    <property type="entry name" value="GTPase activation domain, GAP"/>
    <property type="match status" value="1"/>
</dbReference>
<dbReference type="SUPFAM" id="SSF52540">
    <property type="entry name" value="P-loop containing nucleoside triphosphate hydrolases"/>
    <property type="match status" value="1"/>
</dbReference>
<dbReference type="PROSITE" id="PS51676">
    <property type="entry name" value="FF"/>
    <property type="match status" value="4"/>
</dbReference>
<dbReference type="PROSITE" id="PS51852">
    <property type="entry name" value="PG1"/>
    <property type="match status" value="1"/>
</dbReference>
<dbReference type="PROSITE" id="PS51853">
    <property type="entry name" value="PG2"/>
    <property type="match status" value="1"/>
</dbReference>
<dbReference type="PROSITE" id="PS50238">
    <property type="entry name" value="RHOGAP"/>
    <property type="match status" value="1"/>
</dbReference>
<protein>
    <recommendedName>
        <fullName evidence="4">Rho GTPase-activating protein 35</fullName>
    </recommendedName>
    <alternativeName>
        <fullName evidence="10">Glucocorticoid receptor DNA-binding factor 1</fullName>
    </alternativeName>
    <alternativeName>
        <fullName>Rho GAP p190A</fullName>
        <shortName>p190-A</shortName>
    </alternativeName>
</protein>
<reference evidence="11" key="1">
    <citation type="journal article" date="2002" name="Gene">
        <title>Molecular cloning, characterization and mapping of the canine glucocorticoid receptor DNA binding factor 1 (GRLF1).</title>
        <authorList>
            <person name="Zangerl B."/>
            <person name="Zhang Q."/>
            <person name="Pearce-Kelling S.E."/>
            <person name="Aguirre G.D."/>
        </authorList>
    </citation>
    <scope>NUCLEOTIDE SEQUENCE [GENOMIC DNA / MRNA]</scope>
    <scope>TISSUE SPECIFICITY</scope>
    <source>
        <tissue>Retina</tissue>
    </source>
</reference>
<accession>P83509</accession>
<name>RHG35_CANLF</name>
<gene>
    <name evidence="4" type="primary">ARHGAP35</name>
    <name evidence="4" type="synonym">GRLF1</name>
    <name evidence="4" type="synonym">P190A</name>
    <name evidence="4" type="synonym">p190ARHOGAP</name>
</gene>